<reference key="1">
    <citation type="journal article" date="1994" name="Nature">
        <title>Complete DNA sequence of yeast chromosome XI.</title>
        <authorList>
            <person name="Dujon B."/>
            <person name="Alexandraki D."/>
            <person name="Andre B."/>
            <person name="Ansorge W."/>
            <person name="Baladron V."/>
            <person name="Ballesta J.P.G."/>
            <person name="Banrevi A."/>
            <person name="Bolle P.-A."/>
            <person name="Bolotin-Fukuhara M."/>
            <person name="Bossier P."/>
            <person name="Bou G."/>
            <person name="Boyer J."/>
            <person name="Buitrago M.J."/>
            <person name="Cheret G."/>
            <person name="Colleaux L."/>
            <person name="Daignan-Fornier B."/>
            <person name="del Rey F."/>
            <person name="Dion C."/>
            <person name="Domdey H."/>
            <person name="Duesterhoeft A."/>
            <person name="Duesterhus S."/>
            <person name="Entian K.-D."/>
            <person name="Erfle H."/>
            <person name="Esteban P.F."/>
            <person name="Feldmann H."/>
            <person name="Fernandes L."/>
            <person name="Fobo G.M."/>
            <person name="Fritz C."/>
            <person name="Fukuhara H."/>
            <person name="Gabel C."/>
            <person name="Gaillon L."/>
            <person name="Garcia-Cantalejo J.M."/>
            <person name="Garcia-Ramirez J.J."/>
            <person name="Gent M.E."/>
            <person name="Ghazvini M."/>
            <person name="Goffeau A."/>
            <person name="Gonzalez A."/>
            <person name="Grothues D."/>
            <person name="Guerreiro P."/>
            <person name="Hegemann J.H."/>
            <person name="Hewitt N."/>
            <person name="Hilger F."/>
            <person name="Hollenberg C.P."/>
            <person name="Horaitis O."/>
            <person name="Indge K.J."/>
            <person name="Jacquier A."/>
            <person name="James C.M."/>
            <person name="Jauniaux J.-C."/>
            <person name="Jimenez A."/>
            <person name="Keuchel H."/>
            <person name="Kirchrath L."/>
            <person name="Kleine K."/>
            <person name="Koetter P."/>
            <person name="Legrain P."/>
            <person name="Liebl S."/>
            <person name="Louis E.J."/>
            <person name="Maia e Silva A."/>
            <person name="Marck C."/>
            <person name="Monnier A.-L."/>
            <person name="Moestl D."/>
            <person name="Mueller S."/>
            <person name="Obermaier B."/>
            <person name="Oliver S.G."/>
            <person name="Pallier C."/>
            <person name="Pascolo S."/>
            <person name="Pfeiffer F."/>
            <person name="Philippsen P."/>
            <person name="Planta R.J."/>
            <person name="Pohl F.M."/>
            <person name="Pohl T.M."/>
            <person name="Poehlmann R."/>
            <person name="Portetelle D."/>
            <person name="Purnelle B."/>
            <person name="Puzos V."/>
            <person name="Ramezani Rad M."/>
            <person name="Rasmussen S.W."/>
            <person name="Remacha M.A."/>
            <person name="Revuelta J.L."/>
            <person name="Richard G.-F."/>
            <person name="Rieger M."/>
            <person name="Rodrigues-Pousada C."/>
            <person name="Rose M."/>
            <person name="Rupp T."/>
            <person name="Santos M.A."/>
            <person name="Schwager C."/>
            <person name="Sensen C."/>
            <person name="Skala J."/>
            <person name="Soares H."/>
            <person name="Sor F."/>
            <person name="Stegemann J."/>
            <person name="Tettelin H."/>
            <person name="Thierry A."/>
            <person name="Tzermia M."/>
            <person name="Urrestarazu L.A."/>
            <person name="van Dyck L."/>
            <person name="van Vliet-Reedijk J.C."/>
            <person name="Valens M."/>
            <person name="Vandenbol M."/>
            <person name="Vilela C."/>
            <person name="Vissers S."/>
            <person name="von Wettstein D."/>
            <person name="Voss H."/>
            <person name="Wiemann S."/>
            <person name="Xu G."/>
            <person name="Zimmermann J."/>
            <person name="Haasemann M."/>
            <person name="Becker I."/>
            <person name="Mewes H.-W."/>
        </authorList>
    </citation>
    <scope>NUCLEOTIDE SEQUENCE [LARGE SCALE GENOMIC DNA]</scope>
    <source>
        <strain>ATCC 204508 / S288c</strain>
    </source>
</reference>
<reference key="2">
    <citation type="journal article" date="2014" name="G3 (Bethesda)">
        <title>The reference genome sequence of Saccharomyces cerevisiae: Then and now.</title>
        <authorList>
            <person name="Engel S.R."/>
            <person name="Dietrich F.S."/>
            <person name="Fisk D.G."/>
            <person name="Binkley G."/>
            <person name="Balakrishnan R."/>
            <person name="Costanzo M.C."/>
            <person name="Dwight S.S."/>
            <person name="Hitz B.C."/>
            <person name="Karra K."/>
            <person name="Nash R.S."/>
            <person name="Weng S."/>
            <person name="Wong E.D."/>
            <person name="Lloyd P."/>
            <person name="Skrzypek M.S."/>
            <person name="Miyasato S.R."/>
            <person name="Simison M."/>
            <person name="Cherry J.M."/>
        </authorList>
    </citation>
    <scope>GENOME REANNOTATION</scope>
    <source>
        <strain>ATCC 204508 / S288c</strain>
    </source>
</reference>
<reference key="3">
    <citation type="journal article" date="2003" name="Proc. Natl. Acad. Sci. U.S.A.">
        <title>The proteome of Saccharomyces cerevisiae mitochondria.</title>
        <authorList>
            <person name="Sickmann A."/>
            <person name="Reinders J."/>
            <person name="Wagner Y."/>
            <person name="Joppich C."/>
            <person name="Zahedi R.P."/>
            <person name="Meyer H.E."/>
            <person name="Schoenfisch B."/>
            <person name="Perschil I."/>
            <person name="Chacinska A."/>
            <person name="Guiard B."/>
            <person name="Rehling P."/>
            <person name="Pfanner N."/>
            <person name="Meisinger C."/>
        </authorList>
    </citation>
    <scope>SUBCELLULAR LOCATION [LARGE SCALE ANALYSIS]</scope>
    <source>
        <strain>ATCC 76625 / YPH499</strain>
    </source>
</reference>
<name>FOLC_YEAST</name>
<dbReference type="EC" id="6.3.2.17"/>
<dbReference type="EMBL" id="Z28131">
    <property type="protein sequence ID" value="CAA81972.1"/>
    <property type="molecule type" value="Genomic_DNA"/>
</dbReference>
<dbReference type="EMBL" id="BK006944">
    <property type="protein sequence ID" value="DAA09030.1"/>
    <property type="molecule type" value="Genomic_DNA"/>
</dbReference>
<dbReference type="PIR" id="S37961">
    <property type="entry name" value="S37961"/>
</dbReference>
<dbReference type="RefSeq" id="NP_012790.1">
    <property type="nucleotide sequence ID" value="NM_001179698.1"/>
</dbReference>
<dbReference type="SMR" id="P36001"/>
<dbReference type="BioGRID" id="34004">
    <property type="interactions" value="94"/>
</dbReference>
<dbReference type="FunCoup" id="P36001">
    <property type="interactions" value="237"/>
</dbReference>
<dbReference type="IntAct" id="P36001">
    <property type="interactions" value="1"/>
</dbReference>
<dbReference type="MINT" id="P36001"/>
<dbReference type="STRING" id="4932.YKL132C"/>
<dbReference type="iPTMnet" id="P36001"/>
<dbReference type="PaxDb" id="4932-YKL132C"/>
<dbReference type="PeptideAtlas" id="P36001"/>
<dbReference type="EnsemblFungi" id="YKL132C_mRNA">
    <property type="protein sequence ID" value="YKL132C"/>
    <property type="gene ID" value="YKL132C"/>
</dbReference>
<dbReference type="GeneID" id="853727"/>
<dbReference type="KEGG" id="sce:YKL132C"/>
<dbReference type="AGR" id="SGD:S000001615"/>
<dbReference type="SGD" id="S000001615">
    <property type="gene designation" value="RMA1"/>
</dbReference>
<dbReference type="VEuPathDB" id="FungiDB:YKL132C"/>
<dbReference type="eggNOG" id="KOG2525">
    <property type="taxonomic scope" value="Eukaryota"/>
</dbReference>
<dbReference type="GeneTree" id="ENSGT00390000016526"/>
<dbReference type="HOGENOM" id="CLU_015869_1_1_1"/>
<dbReference type="InParanoid" id="P36001"/>
<dbReference type="OMA" id="SIHDRIC"/>
<dbReference type="OrthoDB" id="5212574at2759"/>
<dbReference type="BioCyc" id="YEAST:YKL132C-MONOMER"/>
<dbReference type="UniPathway" id="UPA00850"/>
<dbReference type="BioGRID-ORCS" id="853727">
    <property type="hits" value="4 hits in 10 CRISPR screens"/>
</dbReference>
<dbReference type="PRO" id="PR:P36001"/>
<dbReference type="Proteomes" id="UP000002311">
    <property type="component" value="Chromosome XI"/>
</dbReference>
<dbReference type="RNAct" id="P36001">
    <property type="molecule type" value="protein"/>
</dbReference>
<dbReference type="GO" id="GO:0005737">
    <property type="term" value="C:cytoplasm"/>
    <property type="evidence" value="ECO:0000318"/>
    <property type="project" value="GO_Central"/>
</dbReference>
<dbReference type="GO" id="GO:0005829">
    <property type="term" value="C:cytosol"/>
    <property type="evidence" value="ECO:0000318"/>
    <property type="project" value="GO_Central"/>
</dbReference>
<dbReference type="GO" id="GO:0005739">
    <property type="term" value="C:mitochondrion"/>
    <property type="evidence" value="ECO:0007005"/>
    <property type="project" value="SGD"/>
</dbReference>
<dbReference type="GO" id="GO:0016881">
    <property type="term" value="F:acid-amino acid ligase activity"/>
    <property type="evidence" value="ECO:0000250"/>
    <property type="project" value="SGD"/>
</dbReference>
<dbReference type="GO" id="GO:0005524">
    <property type="term" value="F:ATP binding"/>
    <property type="evidence" value="ECO:0007669"/>
    <property type="project" value="UniProtKB-KW"/>
</dbReference>
<dbReference type="GO" id="GO:0008841">
    <property type="term" value="F:dihydrofolate synthase activity"/>
    <property type="evidence" value="ECO:0000318"/>
    <property type="project" value="GO_Central"/>
</dbReference>
<dbReference type="GO" id="GO:0046872">
    <property type="term" value="F:metal ion binding"/>
    <property type="evidence" value="ECO:0007669"/>
    <property type="project" value="UniProtKB-KW"/>
</dbReference>
<dbReference type="GO" id="GO:0004326">
    <property type="term" value="F:tetrahydrofolylpolyglutamate synthase activity"/>
    <property type="evidence" value="ECO:0000318"/>
    <property type="project" value="GO_Central"/>
</dbReference>
<dbReference type="GO" id="GO:0009396">
    <property type="term" value="P:folic acid-containing compound biosynthetic process"/>
    <property type="evidence" value="ECO:0000318"/>
    <property type="project" value="GO_Central"/>
</dbReference>
<dbReference type="GO" id="GO:0006730">
    <property type="term" value="P:one-carbon metabolic process"/>
    <property type="evidence" value="ECO:0007669"/>
    <property type="project" value="UniProtKB-KW"/>
</dbReference>
<dbReference type="FunFam" id="3.90.190.20:FF:000010">
    <property type="entry name" value="Dihydrofolate synthetase"/>
    <property type="match status" value="1"/>
</dbReference>
<dbReference type="Gene3D" id="3.90.190.20">
    <property type="entry name" value="Mur ligase, C-terminal domain"/>
    <property type="match status" value="1"/>
</dbReference>
<dbReference type="Gene3D" id="3.40.1190.10">
    <property type="entry name" value="Mur-like, catalytic domain"/>
    <property type="match status" value="1"/>
</dbReference>
<dbReference type="InterPro" id="IPR001645">
    <property type="entry name" value="Folylpolyglutamate_synth"/>
</dbReference>
<dbReference type="InterPro" id="IPR018109">
    <property type="entry name" value="Folylpolyglutamate_synth_CS"/>
</dbReference>
<dbReference type="InterPro" id="IPR036565">
    <property type="entry name" value="Mur-like_cat_sf"/>
</dbReference>
<dbReference type="InterPro" id="IPR036615">
    <property type="entry name" value="Mur_ligase_C_dom_sf"/>
</dbReference>
<dbReference type="NCBIfam" id="TIGR01499">
    <property type="entry name" value="folC"/>
    <property type="match status" value="1"/>
</dbReference>
<dbReference type="PANTHER" id="PTHR11136:SF0">
    <property type="entry name" value="DIHYDROFOLATE SYNTHETASE-RELATED"/>
    <property type="match status" value="1"/>
</dbReference>
<dbReference type="PANTHER" id="PTHR11136">
    <property type="entry name" value="FOLYLPOLYGLUTAMATE SYNTHASE-RELATED"/>
    <property type="match status" value="1"/>
</dbReference>
<dbReference type="SUPFAM" id="SSF53623">
    <property type="entry name" value="MurD-like peptide ligases, catalytic domain"/>
    <property type="match status" value="1"/>
</dbReference>
<dbReference type="SUPFAM" id="SSF53244">
    <property type="entry name" value="MurD-like peptide ligases, peptide-binding domain"/>
    <property type="match status" value="1"/>
</dbReference>
<dbReference type="PROSITE" id="PS01011">
    <property type="entry name" value="FOLYLPOLYGLU_SYNT_1"/>
    <property type="match status" value="1"/>
</dbReference>
<dbReference type="PROSITE" id="PS01012">
    <property type="entry name" value="FOLYLPOLYGLU_SYNT_2"/>
    <property type="match status" value="1"/>
</dbReference>
<sequence length="430" mass="48143">MDDISGRQTLPRINRLLEHVGNPQDSLSILHIAGTNGKETVSKFLTSILQHPGQQRQRVLIGRYTTSSLLNAKEEDISINNEAISLIEYSRIEKELIEADSSLKLQCNNLELLTSVALVYFAKKNCQWCIIETGLAGKQDPGSIIAGQSRVCCAITNVGISDEAFLCKFLSQITESSTNKAIFLLDGSNDEFVRNTITKRCHDVGCPLEITDPSLRDYNVHTDTWGTLEVRLPYSEEEYQIFNLRVAIAVLDFLSKEKKVCISKDQLSQGLISVDWPRSLHRLDYCYESTSGKKIALLLDNANNAKAARNLACHLRTTYGDTPLTFVIAITTGKKVSPLLDPLIRPQDYVIVTRFGSVVGMPWIQSLEPVNLLAFIKNRYTRNVNMQPDLQSVWTFLETSGLKTIVPVIVCGSLYICKELLRLHNCHLPV</sequence>
<accession>P36001</accession>
<accession>D6VX64</accession>
<protein>
    <recommendedName>
        <fullName>Probable folylpolyglutamate synthase</fullName>
        <ecNumber>6.3.2.17</ecNumber>
    </recommendedName>
    <alternativeName>
        <fullName>Folylpoly-gamma-glutamate synthetase</fullName>
        <shortName>FPGS</shortName>
    </alternativeName>
    <alternativeName>
        <fullName>Tetrahydrofolylpolyglutamate synthase</fullName>
        <shortName>Tetrahydrofolate synthase</shortName>
    </alternativeName>
</protein>
<keyword id="KW-0067">ATP-binding</keyword>
<keyword id="KW-0436">Ligase</keyword>
<keyword id="KW-0460">Magnesium</keyword>
<keyword id="KW-0479">Metal-binding</keyword>
<keyword id="KW-0496">Mitochondrion</keyword>
<keyword id="KW-0547">Nucleotide-binding</keyword>
<keyword id="KW-0554">One-carbon metabolism</keyword>
<keyword id="KW-1185">Reference proteome</keyword>
<comment type="function">
    <text>Conversion of folates to polyglutamate derivatives.</text>
</comment>
<comment type="catalytic activity">
    <reaction>
        <text>(6S)-5,6,7,8-tetrahydrofolyl-(gamma-L-Glu)(n) + L-glutamate + ATP = (6S)-5,6,7,8-tetrahydrofolyl-(gamma-L-Glu)(n+1) + ADP + phosphate + H(+)</text>
        <dbReference type="Rhea" id="RHEA:10580"/>
        <dbReference type="Rhea" id="RHEA-COMP:14738"/>
        <dbReference type="Rhea" id="RHEA-COMP:14740"/>
        <dbReference type="ChEBI" id="CHEBI:15378"/>
        <dbReference type="ChEBI" id="CHEBI:29985"/>
        <dbReference type="ChEBI" id="CHEBI:30616"/>
        <dbReference type="ChEBI" id="CHEBI:43474"/>
        <dbReference type="ChEBI" id="CHEBI:141005"/>
        <dbReference type="ChEBI" id="CHEBI:456216"/>
        <dbReference type="EC" id="6.3.2.17"/>
    </reaction>
</comment>
<comment type="pathway">
    <text>Cofactor biosynthesis; tetrahydrofolylpolyglutamate biosynthesis.</text>
</comment>
<comment type="subcellular location">
    <subcellularLocation>
        <location evidence="2">Mitochondrion</location>
    </subcellularLocation>
</comment>
<comment type="similarity">
    <text evidence="3">Belongs to the folylpolyglutamate synthase family.</text>
</comment>
<gene>
    <name type="primary">RMA1</name>
    <name type="ordered locus">YKL132C</name>
</gene>
<feature type="chain" id="PRO_0000168307" description="Probable folylpolyglutamate synthase">
    <location>
        <begin position="1"/>
        <end position="430"/>
    </location>
</feature>
<feature type="binding site" evidence="1">
    <location>
        <begin position="37"/>
        <end position="40"/>
    </location>
    <ligand>
        <name>ATP</name>
        <dbReference type="ChEBI" id="CHEBI:30616"/>
    </ligand>
</feature>
<feature type="binding site" evidence="1">
    <location>
        <position position="132"/>
    </location>
    <ligand>
        <name>Mg(2+)</name>
        <dbReference type="ChEBI" id="CHEBI:18420"/>
        <label>1</label>
    </ligand>
</feature>
<feature type="binding site" evidence="1">
    <location>
        <position position="300"/>
    </location>
    <ligand>
        <name>ATP</name>
        <dbReference type="ChEBI" id="CHEBI:30616"/>
    </ligand>
</feature>
<proteinExistence type="inferred from homology"/>
<evidence type="ECO:0000250" key="1">
    <source>
        <dbReference type="UniProtKB" id="P08192"/>
    </source>
</evidence>
<evidence type="ECO:0000269" key="2">
    <source>
    </source>
</evidence>
<evidence type="ECO:0000305" key="3"/>
<organism>
    <name type="scientific">Saccharomyces cerevisiae (strain ATCC 204508 / S288c)</name>
    <name type="common">Baker's yeast</name>
    <dbReference type="NCBI Taxonomy" id="559292"/>
    <lineage>
        <taxon>Eukaryota</taxon>
        <taxon>Fungi</taxon>
        <taxon>Dikarya</taxon>
        <taxon>Ascomycota</taxon>
        <taxon>Saccharomycotina</taxon>
        <taxon>Saccharomycetes</taxon>
        <taxon>Saccharomycetales</taxon>
        <taxon>Saccharomycetaceae</taxon>
        <taxon>Saccharomyces</taxon>
    </lineage>
</organism>